<keyword id="KW-0413">Isomerase</keyword>
<keyword id="KW-1185">Reference proteome</keyword>
<keyword id="KW-0819">tRNA processing</keyword>
<dbReference type="EC" id="5.4.99.12" evidence="1"/>
<dbReference type="EMBL" id="BA000043">
    <property type="protein sequence ID" value="BAD74423.1"/>
    <property type="molecule type" value="Genomic_DNA"/>
</dbReference>
<dbReference type="RefSeq" id="WP_011229650.1">
    <property type="nucleotide sequence ID" value="NC_006510.1"/>
</dbReference>
<dbReference type="SMR" id="Q5L3Q7"/>
<dbReference type="STRING" id="235909.GK0138"/>
<dbReference type="GeneID" id="32062126"/>
<dbReference type="KEGG" id="gka:GK0138"/>
<dbReference type="eggNOG" id="COG0101">
    <property type="taxonomic scope" value="Bacteria"/>
</dbReference>
<dbReference type="HOGENOM" id="CLU_014673_0_1_9"/>
<dbReference type="Proteomes" id="UP000001172">
    <property type="component" value="Chromosome"/>
</dbReference>
<dbReference type="GO" id="GO:0003723">
    <property type="term" value="F:RNA binding"/>
    <property type="evidence" value="ECO:0007669"/>
    <property type="project" value="InterPro"/>
</dbReference>
<dbReference type="GO" id="GO:0160147">
    <property type="term" value="F:tRNA pseudouridine(38-40) synthase activity"/>
    <property type="evidence" value="ECO:0007669"/>
    <property type="project" value="UniProtKB-EC"/>
</dbReference>
<dbReference type="GO" id="GO:0031119">
    <property type="term" value="P:tRNA pseudouridine synthesis"/>
    <property type="evidence" value="ECO:0007669"/>
    <property type="project" value="UniProtKB-UniRule"/>
</dbReference>
<dbReference type="CDD" id="cd02570">
    <property type="entry name" value="PseudoU_synth_EcTruA"/>
    <property type="match status" value="1"/>
</dbReference>
<dbReference type="FunFam" id="3.30.70.580:FF:000001">
    <property type="entry name" value="tRNA pseudouridine synthase A"/>
    <property type="match status" value="1"/>
</dbReference>
<dbReference type="Gene3D" id="3.30.70.660">
    <property type="entry name" value="Pseudouridine synthase I, catalytic domain, C-terminal subdomain"/>
    <property type="match status" value="1"/>
</dbReference>
<dbReference type="Gene3D" id="3.30.70.580">
    <property type="entry name" value="Pseudouridine synthase I, catalytic domain, N-terminal subdomain"/>
    <property type="match status" value="1"/>
</dbReference>
<dbReference type="HAMAP" id="MF_00171">
    <property type="entry name" value="TruA"/>
    <property type="match status" value="1"/>
</dbReference>
<dbReference type="InterPro" id="IPR020103">
    <property type="entry name" value="PsdUridine_synth_cat_dom_sf"/>
</dbReference>
<dbReference type="InterPro" id="IPR001406">
    <property type="entry name" value="PsdUridine_synth_TruA"/>
</dbReference>
<dbReference type="InterPro" id="IPR020097">
    <property type="entry name" value="PsdUridine_synth_TruA_a/b_dom"/>
</dbReference>
<dbReference type="InterPro" id="IPR020095">
    <property type="entry name" value="PsdUridine_synth_TruA_C"/>
</dbReference>
<dbReference type="InterPro" id="IPR020094">
    <property type="entry name" value="TruA/RsuA/RluB/E/F_N"/>
</dbReference>
<dbReference type="NCBIfam" id="TIGR00071">
    <property type="entry name" value="hisT_truA"/>
    <property type="match status" value="1"/>
</dbReference>
<dbReference type="PANTHER" id="PTHR11142">
    <property type="entry name" value="PSEUDOURIDYLATE SYNTHASE"/>
    <property type="match status" value="1"/>
</dbReference>
<dbReference type="PANTHER" id="PTHR11142:SF0">
    <property type="entry name" value="TRNA PSEUDOURIDINE SYNTHASE-LIKE 1"/>
    <property type="match status" value="1"/>
</dbReference>
<dbReference type="Pfam" id="PF01416">
    <property type="entry name" value="PseudoU_synth_1"/>
    <property type="match status" value="2"/>
</dbReference>
<dbReference type="PIRSF" id="PIRSF001430">
    <property type="entry name" value="tRNA_psdUrid_synth"/>
    <property type="match status" value="1"/>
</dbReference>
<dbReference type="SUPFAM" id="SSF55120">
    <property type="entry name" value="Pseudouridine synthase"/>
    <property type="match status" value="1"/>
</dbReference>
<name>TRUA_GEOKA</name>
<organism>
    <name type="scientific">Geobacillus kaustophilus (strain HTA426)</name>
    <dbReference type="NCBI Taxonomy" id="235909"/>
    <lineage>
        <taxon>Bacteria</taxon>
        <taxon>Bacillati</taxon>
        <taxon>Bacillota</taxon>
        <taxon>Bacilli</taxon>
        <taxon>Bacillales</taxon>
        <taxon>Anoxybacillaceae</taxon>
        <taxon>Geobacillus</taxon>
        <taxon>Geobacillus thermoleovorans group</taxon>
    </lineage>
</organism>
<protein>
    <recommendedName>
        <fullName evidence="1">tRNA pseudouridine synthase A</fullName>
        <ecNumber evidence="1">5.4.99.12</ecNumber>
    </recommendedName>
    <alternativeName>
        <fullName evidence="1">tRNA pseudouridine(38-40) synthase</fullName>
    </alternativeName>
    <alternativeName>
        <fullName evidence="1">tRNA pseudouridylate synthase I</fullName>
    </alternativeName>
    <alternativeName>
        <fullName evidence="1">tRNA-uridine isomerase I</fullName>
    </alternativeName>
</protein>
<reference key="1">
    <citation type="journal article" date="2004" name="Nucleic Acids Res.">
        <title>Thermoadaptation trait revealed by the genome sequence of thermophilic Geobacillus kaustophilus.</title>
        <authorList>
            <person name="Takami H."/>
            <person name="Takaki Y."/>
            <person name="Chee G.-J."/>
            <person name="Nishi S."/>
            <person name="Shimamura S."/>
            <person name="Suzuki H."/>
            <person name="Matsui S."/>
            <person name="Uchiyama I."/>
        </authorList>
    </citation>
    <scope>NUCLEOTIDE SEQUENCE [LARGE SCALE GENOMIC DNA]</scope>
    <source>
        <strain>HTA426</strain>
    </source>
</reference>
<gene>
    <name evidence="1" type="primary">truA</name>
    <name type="ordered locus">GK0138</name>
</gene>
<accession>Q5L3Q7</accession>
<proteinExistence type="inferred from homology"/>
<feature type="chain" id="PRO_0000057383" description="tRNA pseudouridine synthase A">
    <location>
        <begin position="1"/>
        <end position="258"/>
    </location>
</feature>
<feature type="active site" description="Nucleophile" evidence="1">
    <location>
        <position position="54"/>
    </location>
</feature>
<feature type="binding site" evidence="1">
    <location>
        <position position="112"/>
    </location>
    <ligand>
        <name>substrate</name>
    </ligand>
</feature>
<comment type="function">
    <text evidence="1">Formation of pseudouridine at positions 38, 39 and 40 in the anticodon stem and loop of transfer RNAs.</text>
</comment>
<comment type="catalytic activity">
    <reaction evidence="1">
        <text>uridine(38/39/40) in tRNA = pseudouridine(38/39/40) in tRNA</text>
        <dbReference type="Rhea" id="RHEA:22376"/>
        <dbReference type="Rhea" id="RHEA-COMP:10085"/>
        <dbReference type="Rhea" id="RHEA-COMP:10087"/>
        <dbReference type="ChEBI" id="CHEBI:65314"/>
        <dbReference type="ChEBI" id="CHEBI:65315"/>
        <dbReference type="EC" id="5.4.99.12"/>
    </reaction>
</comment>
<comment type="subunit">
    <text evidence="1">Homodimer.</text>
</comment>
<comment type="similarity">
    <text evidence="1">Belongs to the tRNA pseudouridine synthase TruA family.</text>
</comment>
<evidence type="ECO:0000255" key="1">
    <source>
        <dbReference type="HAMAP-Rule" id="MF_00171"/>
    </source>
</evidence>
<sequence>MTQRIKCIIAYDGTHFSGYQIQPGKRTVQGEFEEVLRRMHKGTKVRVAASGRTDAGVHAYGQVIHFDTPLSLSSEQWKKALNAQLPDDIVVRFVQEADADFHARFSAKAKEYRYKVWTAAERDVFRRHYCAWHPYSLHISAMNEALRLLHGTHDFTSFCSAKTSIEDRVRTMYRAEVKADGPMLEFRFVGSGFLYNMVRIIVGTVLEIGQGKRSPADISTLLAAKDRRLAGPTAPAEGLYLWRVYYEDECLVHSLVDG</sequence>